<gene>
    <name evidence="5" type="primary">MRM2</name>
    <name evidence="7" type="ordered locus">YGL136C</name>
    <name type="ORF">G2830</name>
</gene>
<feature type="transit peptide" description="Mitochondrion" evidence="3">
    <location>
        <begin position="1"/>
        <end position="18"/>
    </location>
</feature>
<feature type="chain" id="PRO_0000155588" description="rRNA methyltransferase 2, mitochondrial">
    <location>
        <begin position="19"/>
        <end position="320"/>
    </location>
</feature>
<feature type="active site" description="Proton acceptor" evidence="1">
    <location>
        <position position="264"/>
    </location>
</feature>
<feature type="binding site" evidence="2">
    <location>
        <begin position="83"/>
        <end position="86"/>
    </location>
    <ligand>
        <name>S-adenosyl-L-methionine</name>
        <dbReference type="ChEBI" id="CHEBI:59789"/>
    </ligand>
</feature>
<feature type="binding site" evidence="2">
    <location>
        <position position="104"/>
    </location>
    <ligand>
        <name>S-adenosyl-L-methionine</name>
        <dbReference type="ChEBI" id="CHEBI:59789"/>
    </ligand>
</feature>
<feature type="binding site" evidence="2">
    <location>
        <begin position="178"/>
        <end position="179"/>
    </location>
    <ligand>
        <name>S-adenosyl-L-methionine</name>
        <dbReference type="ChEBI" id="CHEBI:59789"/>
    </ligand>
</feature>
<feature type="binding site" evidence="2">
    <location>
        <position position="203"/>
    </location>
    <ligand>
        <name>S-adenosyl-L-methionine</name>
        <dbReference type="ChEBI" id="CHEBI:59789"/>
    </ligand>
</feature>
<reference key="1">
    <citation type="journal article" date="1996" name="Yeast">
        <title>Sequence analysis of a 14.6 kb DNA fragment of Saccharomyces cerevisiae chromosome VII reveals SEC27, SSM1b, a putative S-adenosylmethionine-dependent enzyme and six new open reading frames.</title>
        <authorList>
            <person name="Escribano V."/>
            <person name="Eraso P."/>
            <person name="Portillo F."/>
            <person name="Mazon M.J."/>
        </authorList>
    </citation>
    <scope>NUCLEOTIDE SEQUENCE [GENOMIC DNA]</scope>
    <source>
        <strain>ATCC 96604 / S288c / FY1679</strain>
    </source>
</reference>
<reference key="2">
    <citation type="journal article" date="1997" name="Nature">
        <title>The nucleotide sequence of Saccharomyces cerevisiae chromosome VII.</title>
        <authorList>
            <person name="Tettelin H."/>
            <person name="Agostoni-Carbone M.L."/>
            <person name="Albermann K."/>
            <person name="Albers M."/>
            <person name="Arroyo J."/>
            <person name="Backes U."/>
            <person name="Barreiros T."/>
            <person name="Bertani I."/>
            <person name="Bjourson A.J."/>
            <person name="Brueckner M."/>
            <person name="Bruschi C.V."/>
            <person name="Carignani G."/>
            <person name="Castagnoli L."/>
            <person name="Cerdan E."/>
            <person name="Clemente M.L."/>
            <person name="Coblenz A."/>
            <person name="Coglievina M."/>
            <person name="Coissac E."/>
            <person name="Defoor E."/>
            <person name="Del Bino S."/>
            <person name="Delius H."/>
            <person name="Delneri D."/>
            <person name="de Wergifosse P."/>
            <person name="Dujon B."/>
            <person name="Durand P."/>
            <person name="Entian K.-D."/>
            <person name="Eraso P."/>
            <person name="Escribano V."/>
            <person name="Fabiani L."/>
            <person name="Fartmann B."/>
            <person name="Feroli F."/>
            <person name="Feuermann M."/>
            <person name="Frontali L."/>
            <person name="Garcia-Gonzalez M."/>
            <person name="Garcia-Saez M.I."/>
            <person name="Goffeau A."/>
            <person name="Guerreiro P."/>
            <person name="Hani J."/>
            <person name="Hansen M."/>
            <person name="Hebling U."/>
            <person name="Hernandez K."/>
            <person name="Heumann K."/>
            <person name="Hilger F."/>
            <person name="Hofmann B."/>
            <person name="Indge K.J."/>
            <person name="James C.M."/>
            <person name="Klima R."/>
            <person name="Koetter P."/>
            <person name="Kramer B."/>
            <person name="Kramer W."/>
            <person name="Lauquin G."/>
            <person name="Leuther H."/>
            <person name="Louis E.J."/>
            <person name="Maillier E."/>
            <person name="Marconi A."/>
            <person name="Martegani E."/>
            <person name="Mazon M.J."/>
            <person name="Mazzoni C."/>
            <person name="McReynolds A.D.K."/>
            <person name="Melchioretto P."/>
            <person name="Mewes H.-W."/>
            <person name="Minenkova O."/>
            <person name="Mueller-Auer S."/>
            <person name="Nawrocki A."/>
            <person name="Netter P."/>
            <person name="Neu R."/>
            <person name="Nombela C."/>
            <person name="Oliver S.G."/>
            <person name="Panzeri L."/>
            <person name="Paoluzi S."/>
            <person name="Plevani P."/>
            <person name="Portetelle D."/>
            <person name="Portillo F."/>
            <person name="Potier S."/>
            <person name="Purnelle B."/>
            <person name="Rieger M."/>
            <person name="Riles L."/>
            <person name="Rinaldi T."/>
            <person name="Robben J."/>
            <person name="Rodrigues-Pousada C."/>
            <person name="Rodriguez-Belmonte E."/>
            <person name="Rodriguez-Torres A.M."/>
            <person name="Rose M."/>
            <person name="Ruzzi M."/>
            <person name="Saliola M."/>
            <person name="Sanchez-Perez M."/>
            <person name="Schaefer B."/>
            <person name="Schaefer M."/>
            <person name="Scharfe M."/>
            <person name="Schmidheini T."/>
            <person name="Schreer A."/>
            <person name="Skala J."/>
            <person name="Souciet J.-L."/>
            <person name="Steensma H.Y."/>
            <person name="Talla E."/>
            <person name="Thierry A."/>
            <person name="Vandenbol M."/>
            <person name="van der Aart Q.J.M."/>
            <person name="Van Dyck L."/>
            <person name="Vanoni M."/>
            <person name="Verhasselt P."/>
            <person name="Voet M."/>
            <person name="Volckaert G."/>
            <person name="Wambutt R."/>
            <person name="Watson M.D."/>
            <person name="Weber N."/>
            <person name="Wedler E."/>
            <person name="Wedler H."/>
            <person name="Wipfli P."/>
            <person name="Wolf K."/>
            <person name="Wright L.F."/>
            <person name="Zaccaria P."/>
            <person name="Zimmermann M."/>
            <person name="Zollner A."/>
            <person name="Kleine K."/>
        </authorList>
    </citation>
    <scope>NUCLEOTIDE SEQUENCE [LARGE SCALE GENOMIC DNA]</scope>
    <source>
        <strain>ATCC 204508 / S288c</strain>
    </source>
</reference>
<reference key="3">
    <citation type="journal article" date="2014" name="G3 (Bethesda)">
        <title>The reference genome sequence of Saccharomyces cerevisiae: Then and now.</title>
        <authorList>
            <person name="Engel S.R."/>
            <person name="Dietrich F.S."/>
            <person name="Fisk D.G."/>
            <person name="Binkley G."/>
            <person name="Balakrishnan R."/>
            <person name="Costanzo M.C."/>
            <person name="Dwight S.S."/>
            <person name="Hitz B.C."/>
            <person name="Karra K."/>
            <person name="Nash R.S."/>
            <person name="Weng S."/>
            <person name="Wong E.D."/>
            <person name="Lloyd P."/>
            <person name="Skrzypek M.S."/>
            <person name="Miyasato S.R."/>
            <person name="Simison M."/>
            <person name="Cherry J.M."/>
        </authorList>
    </citation>
    <scope>GENOME REANNOTATION</scope>
    <source>
        <strain>ATCC 204508 / S288c</strain>
    </source>
</reference>
<reference key="4">
    <citation type="journal article" date="2007" name="Genome Res.">
        <title>Approaching a complete repository of sequence-verified protein-encoding clones for Saccharomyces cerevisiae.</title>
        <authorList>
            <person name="Hu Y."/>
            <person name="Rolfs A."/>
            <person name="Bhullar B."/>
            <person name="Murthy T.V.S."/>
            <person name="Zhu C."/>
            <person name="Berger M.F."/>
            <person name="Camargo A.A."/>
            <person name="Kelley F."/>
            <person name="McCarron S."/>
            <person name="Jepson D."/>
            <person name="Richardson A."/>
            <person name="Raphael J."/>
            <person name="Moreira D."/>
            <person name="Taycher E."/>
            <person name="Zuo D."/>
            <person name="Mohr S."/>
            <person name="Kane M.F."/>
            <person name="Williamson J."/>
            <person name="Simpson A.J.G."/>
            <person name="Bulyk M.L."/>
            <person name="Harlow E."/>
            <person name="Marsischky G."/>
            <person name="Kolodner R.D."/>
            <person name="LaBaer J."/>
        </authorList>
    </citation>
    <scope>NUCLEOTIDE SEQUENCE [GENOMIC DNA]</scope>
    <source>
        <strain>ATCC 204508 / S288c</strain>
    </source>
</reference>
<reference key="5">
    <citation type="journal article" date="2002" name="EMBO J.">
        <title>MRM2 encodes a novel yeast mitochondrial 21S rRNA methyltransferase.</title>
        <authorList>
            <person name="Pintard L."/>
            <person name="Bujnicki J.M."/>
            <person name="Lapeyre B."/>
            <person name="Bonnerot C."/>
        </authorList>
    </citation>
    <scope>FUNCTION</scope>
    <scope>CATALYTIC ACTIVITY</scope>
    <scope>SUBCELLULAR LOCATION</scope>
    <scope>DISRUPTION PHENOTYPE</scope>
</reference>
<name>MRM2_YEAST</name>
<proteinExistence type="evidence at protein level"/>
<evidence type="ECO:0000250" key="1">
    <source>
        <dbReference type="UniProtKB" id="P0C0R7"/>
    </source>
</evidence>
<evidence type="ECO:0000250" key="2">
    <source>
        <dbReference type="UniProtKB" id="Q9UI43"/>
    </source>
</evidence>
<evidence type="ECO:0000255" key="3"/>
<evidence type="ECO:0000269" key="4">
    <source>
    </source>
</evidence>
<evidence type="ECO:0000303" key="5">
    <source>
    </source>
</evidence>
<evidence type="ECO:0000305" key="6"/>
<evidence type="ECO:0000312" key="7">
    <source>
        <dbReference type="SGD" id="S000003104"/>
    </source>
</evidence>
<sequence length="320" mass="37423">MILVYNRIRSIISSSLGRIHVRYNSNSQNRWLNRQLKDPYTKEAKVQNLRSRAAFKLMQIDDKYRLFSKNRTDQRILDLGYAPGAWSQVARQRSSPNSMILGVDILPCEPPHGVNSIQANILAKRTHDLIRLFFSKHFQLNRHDDLHKDHGYFQNMLEEELTHVKDTELYREIFTSDDIYETPNTNSTLIEREKFPVDVIISDMYEPWPQTTGFWNNITNQAYFRMANTSGVSIRDHYQSIDLCDAALVTAIDLLRPLGSFVCKLYTGEEENLFKKRMQAVFTNVHKFKPDASRDESKETYYIGLKKKRNVDKLDVFSNS</sequence>
<comment type="function">
    <text evidence="4">S-adenosyl-L-methionine-dependent 2'-O-ribose methyltransferase that catalyzes the formation of 2'-O-methyluridine at position 2791 (Um2791) in the 21S mitochondrial large subunit ribosomal RNA (mtLSU rRNA), a universally conserved modification in the peptidyl transferase domain of the mtLSU rRNA.</text>
</comment>
<comment type="catalytic activity">
    <reaction evidence="4">
        <text>uridine(2791) in 21S rRNA + S-adenosyl-L-methionine = 2'-O-methyluridine(2791) in 21S rRNA + S-adenosyl-L-homocysteine + H(+)</text>
        <dbReference type="Rhea" id="RHEA:42728"/>
        <dbReference type="Rhea" id="RHEA-COMP:10204"/>
        <dbReference type="Rhea" id="RHEA-COMP:10205"/>
        <dbReference type="ChEBI" id="CHEBI:15378"/>
        <dbReference type="ChEBI" id="CHEBI:57856"/>
        <dbReference type="ChEBI" id="CHEBI:59789"/>
        <dbReference type="ChEBI" id="CHEBI:65315"/>
        <dbReference type="ChEBI" id="CHEBI:74478"/>
        <dbReference type="EC" id="2.1.1.168"/>
    </reaction>
</comment>
<comment type="subcellular location">
    <subcellularLocation>
        <location evidence="4">Mitochondrion</location>
    </subcellularLocation>
</comment>
<comment type="disruption phenotype">
    <text evidence="4">Loses mitochondrial DNA with high frequency.</text>
</comment>
<comment type="similarity">
    <text evidence="6">Belongs to the class I-like SAM-binding methyltransferase superfamily. RNA methyltransferase RlmE family.</text>
</comment>
<protein>
    <recommendedName>
        <fullName evidence="5">rRNA methyltransferase 2, mitochondrial</fullName>
        <ecNumber evidence="4">2.1.1.168</ecNumber>
    </recommendedName>
    <alternativeName>
        <fullName evidence="5">21S rRNA (uridine(2791)-2'-O)-methyltransferase</fullName>
    </alternativeName>
    <alternativeName>
        <fullName evidence="5">21S rRNA [Um2791] 2'-O-methyltransferase</fullName>
    </alternativeName>
</protein>
<keyword id="KW-0489">Methyltransferase</keyword>
<keyword id="KW-0496">Mitochondrion</keyword>
<keyword id="KW-1185">Reference proteome</keyword>
<keyword id="KW-0698">rRNA processing</keyword>
<keyword id="KW-0949">S-adenosyl-L-methionine</keyword>
<keyword id="KW-0808">Transferase</keyword>
<keyword id="KW-0809">Transit peptide</keyword>
<dbReference type="EC" id="2.1.1.168" evidence="4"/>
<dbReference type="EMBL" id="X92670">
    <property type="protein sequence ID" value="CAA63360.1"/>
    <property type="molecule type" value="Genomic_DNA"/>
</dbReference>
<dbReference type="EMBL" id="Z72658">
    <property type="protein sequence ID" value="CAA96847.1"/>
    <property type="molecule type" value="Genomic_DNA"/>
</dbReference>
<dbReference type="EMBL" id="AY558500">
    <property type="protein sequence ID" value="AAS56826.1"/>
    <property type="molecule type" value="Genomic_DNA"/>
</dbReference>
<dbReference type="EMBL" id="BK006941">
    <property type="protein sequence ID" value="DAA07974.1"/>
    <property type="molecule type" value="Genomic_DNA"/>
</dbReference>
<dbReference type="PIR" id="S64149">
    <property type="entry name" value="S64149"/>
</dbReference>
<dbReference type="RefSeq" id="NP_011379.1">
    <property type="nucleotide sequence ID" value="NM_001181001.1"/>
</dbReference>
<dbReference type="SMR" id="P53123"/>
<dbReference type="BioGRID" id="33116">
    <property type="interactions" value="565"/>
</dbReference>
<dbReference type="FunCoup" id="P53123">
    <property type="interactions" value="43"/>
</dbReference>
<dbReference type="STRING" id="4932.YGL136C"/>
<dbReference type="PaxDb" id="4932-YGL136C"/>
<dbReference type="PeptideAtlas" id="P53123"/>
<dbReference type="EnsemblFungi" id="YGL136C_mRNA">
    <property type="protein sequence ID" value="YGL136C"/>
    <property type="gene ID" value="YGL136C"/>
</dbReference>
<dbReference type="GeneID" id="852741"/>
<dbReference type="KEGG" id="sce:YGL136C"/>
<dbReference type="AGR" id="SGD:S000003104"/>
<dbReference type="SGD" id="S000003104">
    <property type="gene designation" value="MRM2"/>
</dbReference>
<dbReference type="VEuPathDB" id="FungiDB:YGL136C"/>
<dbReference type="eggNOG" id="KOG4589">
    <property type="taxonomic scope" value="Eukaryota"/>
</dbReference>
<dbReference type="HOGENOM" id="CLU_009422_2_0_1"/>
<dbReference type="InParanoid" id="P53123"/>
<dbReference type="OMA" id="WSQVAVN"/>
<dbReference type="OrthoDB" id="20105at2759"/>
<dbReference type="BioCyc" id="YEAST:G3O-30631-MONOMER"/>
<dbReference type="BRENDA" id="2.1.1.168">
    <property type="organism ID" value="984"/>
</dbReference>
<dbReference type="BioGRID-ORCS" id="852741">
    <property type="hits" value="1 hit in 10 CRISPR screens"/>
</dbReference>
<dbReference type="PRO" id="PR:P53123"/>
<dbReference type="Proteomes" id="UP000002311">
    <property type="component" value="Chromosome VII"/>
</dbReference>
<dbReference type="RNAct" id="P53123">
    <property type="molecule type" value="protein"/>
</dbReference>
<dbReference type="GO" id="GO:0005739">
    <property type="term" value="C:mitochondrion"/>
    <property type="evidence" value="ECO:0000314"/>
    <property type="project" value="SGD"/>
</dbReference>
<dbReference type="GO" id="GO:0008650">
    <property type="term" value="F:rRNA (uridine-2'-O-)-methyltransferase activity"/>
    <property type="evidence" value="ECO:0000314"/>
    <property type="project" value="SGD"/>
</dbReference>
<dbReference type="GO" id="GO:0001510">
    <property type="term" value="P:RNA methylation"/>
    <property type="evidence" value="ECO:0000318"/>
    <property type="project" value="GO_Central"/>
</dbReference>
<dbReference type="GO" id="GO:0031167">
    <property type="term" value="P:rRNA methylation"/>
    <property type="evidence" value="ECO:0000314"/>
    <property type="project" value="SGD"/>
</dbReference>
<dbReference type="Gene3D" id="3.40.50.150">
    <property type="entry name" value="Vaccinia Virus protein VP39"/>
    <property type="match status" value="1"/>
</dbReference>
<dbReference type="HAMAP" id="MF_01547">
    <property type="entry name" value="RNA_methyltr_E"/>
    <property type="match status" value="1"/>
</dbReference>
<dbReference type="InterPro" id="IPR050082">
    <property type="entry name" value="RNA_methyltr_RlmE"/>
</dbReference>
<dbReference type="InterPro" id="IPR002877">
    <property type="entry name" value="RNA_MeTrfase_FtsJ_dom"/>
</dbReference>
<dbReference type="InterPro" id="IPR015507">
    <property type="entry name" value="rRNA-MeTfrase_E"/>
</dbReference>
<dbReference type="InterPro" id="IPR029063">
    <property type="entry name" value="SAM-dependent_MTases_sf"/>
</dbReference>
<dbReference type="PANTHER" id="PTHR10920">
    <property type="entry name" value="RIBOSOMAL RNA METHYLTRANSFERASE"/>
    <property type="match status" value="1"/>
</dbReference>
<dbReference type="PANTHER" id="PTHR10920:SF18">
    <property type="entry name" value="RRNA METHYLTRANSFERASE 2, MITOCHONDRIAL"/>
    <property type="match status" value="1"/>
</dbReference>
<dbReference type="Pfam" id="PF01728">
    <property type="entry name" value="FtsJ"/>
    <property type="match status" value="1"/>
</dbReference>
<dbReference type="PIRSF" id="PIRSF005461">
    <property type="entry name" value="23S_rRNA_mtase"/>
    <property type="match status" value="1"/>
</dbReference>
<dbReference type="SUPFAM" id="SSF53335">
    <property type="entry name" value="S-adenosyl-L-methionine-dependent methyltransferases"/>
    <property type="match status" value="1"/>
</dbReference>
<organism>
    <name type="scientific">Saccharomyces cerevisiae (strain ATCC 204508 / S288c)</name>
    <name type="common">Baker's yeast</name>
    <dbReference type="NCBI Taxonomy" id="559292"/>
    <lineage>
        <taxon>Eukaryota</taxon>
        <taxon>Fungi</taxon>
        <taxon>Dikarya</taxon>
        <taxon>Ascomycota</taxon>
        <taxon>Saccharomycotina</taxon>
        <taxon>Saccharomycetes</taxon>
        <taxon>Saccharomycetales</taxon>
        <taxon>Saccharomycetaceae</taxon>
        <taxon>Saccharomyces</taxon>
    </lineage>
</organism>
<accession>P53123</accession>
<accession>D6VU13</accession>